<keyword id="KW-0025">Alternative splicing</keyword>
<keyword id="KW-0416">Keratin</keyword>
<keyword id="KW-1267">Proteomics identification</keyword>
<keyword id="KW-1185">Reference proteome</keyword>
<keyword id="KW-0677">Repeat</keyword>
<reference key="1">
    <citation type="journal article" date="2001" name="J. Biol. Chem.">
        <title>Characterization of a cluster of human high/ultrahigh sulfur keratin-associated protein genes embedded in the type I keratin gene domain on chromosome 17q12-21.</title>
        <authorList>
            <person name="Rogers M.A."/>
            <person name="Langbein L."/>
            <person name="Winter H."/>
            <person name="Ehmann C."/>
            <person name="Praetzel S."/>
            <person name="Korn B."/>
            <person name="Schweizer J."/>
        </authorList>
    </citation>
    <scope>NUCLEOTIDE SEQUENCE [MRNA] (ISOFORMS 1 AND 2)</scope>
    <source>
        <tissue>Scalp</tissue>
    </source>
</reference>
<reference key="2">
    <citation type="journal article" date="2006" name="Nature">
        <title>DNA sequence of human chromosome 17 and analysis of rearrangement in the human lineage.</title>
        <authorList>
            <person name="Zody M.C."/>
            <person name="Garber M."/>
            <person name="Adams D.J."/>
            <person name="Sharpe T."/>
            <person name="Harrow J."/>
            <person name="Lupski J.R."/>
            <person name="Nicholson C."/>
            <person name="Searle S.M."/>
            <person name="Wilming L."/>
            <person name="Young S.K."/>
            <person name="Abouelleil A."/>
            <person name="Allen N.R."/>
            <person name="Bi W."/>
            <person name="Bloom T."/>
            <person name="Borowsky M.L."/>
            <person name="Bugalter B.E."/>
            <person name="Butler J."/>
            <person name="Chang J.L."/>
            <person name="Chen C.-K."/>
            <person name="Cook A."/>
            <person name="Corum B."/>
            <person name="Cuomo C.A."/>
            <person name="de Jong P.J."/>
            <person name="DeCaprio D."/>
            <person name="Dewar K."/>
            <person name="FitzGerald M."/>
            <person name="Gilbert J."/>
            <person name="Gibson R."/>
            <person name="Gnerre S."/>
            <person name="Goldstein S."/>
            <person name="Grafham D.V."/>
            <person name="Grocock R."/>
            <person name="Hafez N."/>
            <person name="Hagopian D.S."/>
            <person name="Hart E."/>
            <person name="Norman C.H."/>
            <person name="Humphray S."/>
            <person name="Jaffe D.B."/>
            <person name="Jones M."/>
            <person name="Kamal M."/>
            <person name="Khodiyar V.K."/>
            <person name="LaButti K."/>
            <person name="Laird G."/>
            <person name="Lehoczky J."/>
            <person name="Liu X."/>
            <person name="Lokyitsang T."/>
            <person name="Loveland J."/>
            <person name="Lui A."/>
            <person name="Macdonald P."/>
            <person name="Major J.E."/>
            <person name="Matthews L."/>
            <person name="Mauceli E."/>
            <person name="McCarroll S.A."/>
            <person name="Mihalev A.H."/>
            <person name="Mudge J."/>
            <person name="Nguyen C."/>
            <person name="Nicol R."/>
            <person name="O'Leary S.B."/>
            <person name="Osoegawa K."/>
            <person name="Schwartz D.C."/>
            <person name="Shaw-Smith C."/>
            <person name="Stankiewicz P."/>
            <person name="Steward C."/>
            <person name="Swarbreck D."/>
            <person name="Venkataraman V."/>
            <person name="Whittaker C.A."/>
            <person name="Yang X."/>
            <person name="Zimmer A.R."/>
            <person name="Bradley A."/>
            <person name="Hubbard T."/>
            <person name="Birren B.W."/>
            <person name="Rogers J."/>
            <person name="Lander E.S."/>
            <person name="Nusbaum C."/>
        </authorList>
    </citation>
    <scope>NUCLEOTIDE SEQUENCE [LARGE SCALE GENOMIC DNA]</scope>
</reference>
<evidence type="ECO:0000303" key="1">
    <source>
    </source>
</evidence>
<evidence type="ECO:0000305" key="2"/>
<accession>Q9BYP9</accession>
<accession>B5MDD6</accession>
<accession>Q9BYQ1</accession>
<gene>
    <name type="primary">KRTAP9-9</name>
    <name type="synonym">KAP9.5</name>
    <name type="synonym">KAP9.9</name>
    <name type="synonym">KRTAP9-5</name>
    <name type="synonym">KRTAP9.5</name>
    <name type="synonym">KRTAP9.9</name>
</gene>
<dbReference type="EMBL" id="AJ406951">
    <property type="protein sequence ID" value="CAC27590.1"/>
    <property type="molecule type" value="mRNA"/>
</dbReference>
<dbReference type="EMBL" id="AJ406949">
    <property type="protein sequence ID" value="CAC27588.1"/>
    <property type="molecule type" value="mRNA"/>
</dbReference>
<dbReference type="EMBL" id="AC006070">
    <property type="status" value="NOT_ANNOTATED_CDS"/>
    <property type="molecule type" value="Genomic_DNA"/>
</dbReference>
<dbReference type="CCDS" id="CCDS54127.1">
    <molecule id="Q9BYP9-3"/>
</dbReference>
<dbReference type="RefSeq" id="NP_001305156.1">
    <molecule id="Q9BYP9-2"/>
    <property type="nucleotide sequence ID" value="NM_001318227.2"/>
</dbReference>
<dbReference type="RefSeq" id="NP_112237.2">
    <molecule id="Q9BYP9-3"/>
    <property type="nucleotide sequence ID" value="NM_030975.2"/>
</dbReference>
<dbReference type="BioGRID" id="123614">
    <property type="interactions" value="1"/>
</dbReference>
<dbReference type="FunCoup" id="Q9BYP9">
    <property type="interactions" value="9"/>
</dbReference>
<dbReference type="iPTMnet" id="Q9BYP9"/>
<dbReference type="PhosphoSitePlus" id="Q9BYP9"/>
<dbReference type="BioMuta" id="KRTAP9-9"/>
<dbReference type="MassIVE" id="Q9BYP9"/>
<dbReference type="PeptideAtlas" id="Q9BYP9"/>
<dbReference type="DNASU" id="81870"/>
<dbReference type="Ensembl" id="ENST00000394008.1">
    <molecule id="Q9BYP9-3"/>
    <property type="protein sequence ID" value="ENSP00000377576.1"/>
    <property type="gene ID" value="ENSG00000198083.9"/>
</dbReference>
<dbReference type="Ensembl" id="ENST00000570825.1">
    <molecule id="Q9BYP9-3"/>
    <property type="protein sequence ID" value="ENSP00000460586.1"/>
    <property type="gene ID" value="ENSG00000262594.4"/>
</dbReference>
<dbReference type="Ensembl" id="ENST00000592900.2">
    <molecule id="Q9BYP9-2"/>
    <property type="protein sequence ID" value="ENSP00000464818.1"/>
    <property type="gene ID" value="ENSG00000267728.4"/>
</dbReference>
<dbReference type="GeneID" id="81870"/>
<dbReference type="KEGG" id="hsa:81870"/>
<dbReference type="MANE-Select" id="ENST00000394008.1">
    <molecule id="Q9BYP9-3"/>
    <property type="protein sequence ID" value="ENSP00000377576.1"/>
    <property type="RefSeq nucleotide sequence ID" value="NM_030975.2"/>
    <property type="RefSeq protein sequence ID" value="NP_112237.2"/>
</dbReference>
<dbReference type="UCSC" id="uc021txh.1">
    <molecule id="Q9BYP9-1"/>
    <property type="organism name" value="human"/>
</dbReference>
<dbReference type="AGR" id="HGNC:16773"/>
<dbReference type="CTD" id="81870"/>
<dbReference type="GeneCards" id="KRTAP9-9"/>
<dbReference type="HGNC" id="HGNC:16773">
    <property type="gene designation" value="KRTAP9-9"/>
</dbReference>
<dbReference type="HPA" id="ENSG00000198083">
    <property type="expression patterns" value="Tissue enriched (skin)"/>
</dbReference>
<dbReference type="neXtProt" id="NX_Q9BYP9"/>
<dbReference type="OpenTargets" id="ENSG00000198083"/>
<dbReference type="PharmGKB" id="PA38413"/>
<dbReference type="VEuPathDB" id="HostDB:ENSG00000198083"/>
<dbReference type="GeneTree" id="ENSGT00940000156135"/>
<dbReference type="HOGENOM" id="CLU_113141_2_0_1"/>
<dbReference type="InParanoid" id="Q9BYP9"/>
<dbReference type="OMA" id="KDPACKD"/>
<dbReference type="PAN-GO" id="Q9BYP9">
    <property type="GO annotations" value="0 GO annotations based on evolutionary models"/>
</dbReference>
<dbReference type="TreeFam" id="TF351356"/>
<dbReference type="PathwayCommons" id="Q9BYP9"/>
<dbReference type="Reactome" id="R-HSA-6805567">
    <property type="pathway name" value="Keratinization"/>
</dbReference>
<dbReference type="BioGRID-ORCS" id="81870">
    <property type="hits" value="14 hits in 1037 CRISPR screens"/>
</dbReference>
<dbReference type="GenomeRNAi" id="81870"/>
<dbReference type="Pharos" id="Q9BYP9">
    <property type="development level" value="Tdark"/>
</dbReference>
<dbReference type="PRO" id="PR:Q9BYP9"/>
<dbReference type="Proteomes" id="UP000005640">
    <property type="component" value="Chromosome 17"/>
</dbReference>
<dbReference type="RNAct" id="Q9BYP9">
    <property type="molecule type" value="protein"/>
</dbReference>
<dbReference type="Bgee" id="ENSG00000198083">
    <property type="expression patterns" value="Expressed in skin of abdomen and 15 other cell types or tissues"/>
</dbReference>
<dbReference type="GO" id="GO:0005829">
    <property type="term" value="C:cytosol"/>
    <property type="evidence" value="ECO:0000304"/>
    <property type="project" value="Reactome"/>
</dbReference>
<dbReference type="GO" id="GO:0045095">
    <property type="term" value="C:keratin filament"/>
    <property type="evidence" value="ECO:0007669"/>
    <property type="project" value="InterPro"/>
</dbReference>
<dbReference type="InterPro" id="IPR002494">
    <property type="entry name" value="KAP"/>
</dbReference>
<dbReference type="Pfam" id="PF13885">
    <property type="entry name" value="Keratin_B2_2"/>
    <property type="match status" value="3"/>
</dbReference>
<feature type="chain" id="PRO_0000185193" description="Keratin-associated protein 9-9">
    <location>
        <begin position="1"/>
        <end position="154"/>
    </location>
</feature>
<feature type="repeat" description="1">
    <location>
        <begin position="8"/>
        <end position="12"/>
    </location>
</feature>
<feature type="repeat" description="2">
    <location>
        <begin position="13"/>
        <end position="17"/>
    </location>
</feature>
<feature type="repeat" description="3">
    <location>
        <begin position="18"/>
        <end position="22"/>
    </location>
</feature>
<feature type="repeat" description="4">
    <location>
        <begin position="37"/>
        <end position="41"/>
    </location>
</feature>
<feature type="repeat" description="5">
    <location>
        <begin position="42"/>
        <end position="46"/>
    </location>
</feature>
<feature type="repeat" description="6">
    <location>
        <begin position="51"/>
        <end position="55"/>
    </location>
</feature>
<feature type="repeat" description="7">
    <location>
        <begin position="56"/>
        <end position="60"/>
    </location>
</feature>
<feature type="repeat" description="8">
    <location>
        <begin position="61"/>
        <end position="65"/>
    </location>
</feature>
<feature type="repeat" description="9">
    <location>
        <begin position="66"/>
        <end position="70"/>
    </location>
</feature>
<feature type="repeat" description="10">
    <location>
        <begin position="75"/>
        <end position="79"/>
    </location>
</feature>
<feature type="repeat" description="11">
    <location>
        <begin position="124"/>
        <end position="128"/>
    </location>
</feature>
<feature type="repeat" description="12">
    <location>
        <begin position="129"/>
        <end position="133"/>
    </location>
</feature>
<feature type="repeat" description="13">
    <location>
        <begin position="134"/>
        <end position="137"/>
    </location>
</feature>
<feature type="repeat" description="14">
    <location>
        <begin position="148"/>
        <end position="152"/>
    </location>
</feature>
<feature type="region of interest" description="14 X 5 AA repeats of C-C-[RQVGE]-[SPSTNQ]-[TASL]">
    <location>
        <begin position="8"/>
        <end position="152"/>
    </location>
</feature>
<feature type="splice variant" id="VSP_054315" description="In isoform 3." evidence="2">
    <location>
        <begin position="15"/>
        <end position="19"/>
    </location>
</feature>
<feature type="splice variant" id="VSP_028981" description="In isoform 2 and isoform 3." evidence="1">
    <original>L</original>
    <variation>LTSCCQPSCCSTTCCQPICCG</variation>
    <location>
        <position position="72"/>
    </location>
</feature>
<feature type="sequence variant" id="VAR_060047" description="In dbSNP:rs9903833.">
    <original>P</original>
    <variation>S</variation>
    <location>
        <position position="36"/>
    </location>
</feature>
<feature type="sequence variant" id="VAR_060048" description="In dbSNP:rs9902235.">
    <original>C</original>
    <variation>S</variation>
    <location>
        <position position="56"/>
    </location>
</feature>
<sequence length="154" mass="16266">MTHCCSPCCQPTCCRTTCCRTTCWKPTTVTTCSSTPCCQPSCCVSSCCQPCCRPACCQNTCCRTTCCQPTCLSSCCGQTSCGSSCGQSSSCAPVYCRRTCYYPTTVCLPGCLNQSCGSSCCQPCCRPACCETTCCRTTCFQPTCVSSCCQPSCC</sequence>
<protein>
    <recommendedName>
        <fullName>Keratin-associated protein 9-9</fullName>
    </recommendedName>
    <alternativeName>
        <fullName>Keratin-associated protein 9-5</fullName>
    </alternativeName>
    <alternativeName>
        <fullName>Keratin-associated protein 9.5</fullName>
    </alternativeName>
    <alternativeName>
        <fullName>Keratin-associated protein 9.9</fullName>
    </alternativeName>
    <alternativeName>
        <fullName>Ultrahigh sulfur keratin-associated protein 9.9</fullName>
    </alternativeName>
</protein>
<proteinExistence type="evidence at protein level"/>
<organism>
    <name type="scientific">Homo sapiens</name>
    <name type="common">Human</name>
    <dbReference type="NCBI Taxonomy" id="9606"/>
    <lineage>
        <taxon>Eukaryota</taxon>
        <taxon>Metazoa</taxon>
        <taxon>Chordata</taxon>
        <taxon>Craniata</taxon>
        <taxon>Vertebrata</taxon>
        <taxon>Euteleostomi</taxon>
        <taxon>Mammalia</taxon>
        <taxon>Eutheria</taxon>
        <taxon>Euarchontoglires</taxon>
        <taxon>Primates</taxon>
        <taxon>Haplorrhini</taxon>
        <taxon>Catarrhini</taxon>
        <taxon>Hominidae</taxon>
        <taxon>Homo</taxon>
    </lineage>
</organism>
<name>KRA99_HUMAN</name>
<comment type="function">
    <text>In the hair cortex, hair keratin intermediate filaments are embedded in an interfilamentous matrix, consisting of hair keratin-associated proteins (KRTAP), which are essential for the formation of a rigid and resistant hair shaft through their extensive disulfide bond cross-linking with abundant cysteine residues of hair keratins. The matrix proteins include the high-sulfur and high-glycine-tyrosine keratins.</text>
</comment>
<comment type="subunit">
    <text>Interacts with hair keratins.</text>
</comment>
<comment type="alternative products">
    <event type="alternative splicing"/>
    <isoform>
        <id>Q9BYP9-1</id>
        <name>1</name>
        <sequence type="displayed"/>
    </isoform>
    <isoform>
        <id>Q9BYP9-2</id>
        <name>2</name>
        <sequence type="described" ref="VSP_028981"/>
    </isoform>
    <isoform>
        <id>Q9BYP9-3</id>
        <name>3</name>
        <sequence type="described" ref="VSP_054315 VSP_028981"/>
    </isoform>
</comment>
<comment type="similarity">
    <text evidence="2">Belongs to the KRTAP type 9 family.</text>
</comment>